<reference key="1">
    <citation type="journal article" date="1998" name="J. Bacteriol.">
        <title>Identification and characterization of the fis operon in enteric bacteria.</title>
        <authorList>
            <person name="Beach M.B."/>
            <person name="Osuna R."/>
        </authorList>
    </citation>
    <scope>NUCLEOTIDE SEQUENCE [GENOMIC DNA]</scope>
</reference>
<organism>
    <name type="scientific">Klebsiella pneumoniae</name>
    <dbReference type="NCBI Taxonomy" id="573"/>
    <lineage>
        <taxon>Bacteria</taxon>
        <taxon>Pseudomonadati</taxon>
        <taxon>Pseudomonadota</taxon>
        <taxon>Gammaproteobacteria</taxon>
        <taxon>Enterobacterales</taxon>
        <taxon>Enterobacteriaceae</taxon>
        <taxon>Klebsiella/Raoultella group</taxon>
        <taxon>Klebsiella</taxon>
        <taxon>Klebsiella pneumoniae complex</taxon>
    </lineage>
</organism>
<gene>
    <name type="primary">cah</name>
</gene>
<proteinExistence type="inferred from homology"/>
<dbReference type="EC" id="4.2.1.1"/>
<dbReference type="EMBL" id="AF040380">
    <property type="protein sequence ID" value="AAC77887.1"/>
    <property type="molecule type" value="Genomic_DNA"/>
</dbReference>
<dbReference type="SMR" id="O52535"/>
<dbReference type="GO" id="GO:0042597">
    <property type="term" value="C:periplasmic space"/>
    <property type="evidence" value="ECO:0007669"/>
    <property type="project" value="UniProtKB-SubCell"/>
</dbReference>
<dbReference type="GO" id="GO:0004089">
    <property type="term" value="F:carbonate dehydratase activity"/>
    <property type="evidence" value="ECO:0007669"/>
    <property type="project" value="UniProtKB-EC"/>
</dbReference>
<dbReference type="GO" id="GO:0008270">
    <property type="term" value="F:zinc ion binding"/>
    <property type="evidence" value="ECO:0007669"/>
    <property type="project" value="InterPro"/>
</dbReference>
<dbReference type="CDD" id="cd03124">
    <property type="entry name" value="alpha_CA_prokaryotic_like"/>
    <property type="match status" value="1"/>
</dbReference>
<dbReference type="Gene3D" id="3.10.200.10">
    <property type="entry name" value="Alpha carbonic anhydrase"/>
    <property type="match status" value="1"/>
</dbReference>
<dbReference type="InterPro" id="IPR041891">
    <property type="entry name" value="Alpha_CA_prokaryot-like"/>
</dbReference>
<dbReference type="InterPro" id="IPR001148">
    <property type="entry name" value="CA_dom"/>
</dbReference>
<dbReference type="InterPro" id="IPR036398">
    <property type="entry name" value="CA_dom_sf"/>
</dbReference>
<dbReference type="InterPro" id="IPR023561">
    <property type="entry name" value="Carbonic_anhydrase_a-class"/>
</dbReference>
<dbReference type="InterPro" id="IPR018338">
    <property type="entry name" value="Carbonic_anhydrase_a-class_CS"/>
</dbReference>
<dbReference type="PANTHER" id="PTHR18952">
    <property type="entry name" value="CARBONIC ANHYDRASE"/>
    <property type="match status" value="1"/>
</dbReference>
<dbReference type="PANTHER" id="PTHR18952:SF265">
    <property type="entry name" value="CARBONIC ANHYDRASE"/>
    <property type="match status" value="1"/>
</dbReference>
<dbReference type="Pfam" id="PF00194">
    <property type="entry name" value="Carb_anhydrase"/>
    <property type="match status" value="1"/>
</dbReference>
<dbReference type="SMART" id="SM01057">
    <property type="entry name" value="Carb_anhydrase"/>
    <property type="match status" value="1"/>
</dbReference>
<dbReference type="SUPFAM" id="SSF51069">
    <property type="entry name" value="Carbonic anhydrase"/>
    <property type="match status" value="1"/>
</dbReference>
<dbReference type="PROSITE" id="PS00162">
    <property type="entry name" value="ALPHA_CA_1"/>
    <property type="match status" value="1"/>
</dbReference>
<dbReference type="PROSITE" id="PS51144">
    <property type="entry name" value="ALPHA_CA_2"/>
    <property type="match status" value="1"/>
</dbReference>
<sequence>MKTSLGKAALLALSMMPVTVFASHWSYEGEGSPEHWGALNEEYKTCQNGMNQSPINIDATFKTHLSPLDTHYIDGPITLINNGHTIQAALKTTTADTITIDGTPFILQQFHFHAPSENTVHGKHYAMEMHLVHKNAKGAVAVVAVMFEQGAENTELNKLWATMPEQAEQTAKIVTQMDLNALLPIDKTYWRFSGSLTTPPCSEGVTRIVLKHPLTLSSAQLAKFSHAMHHDNNRPVQPLNGRVVIE</sequence>
<name>CAH_KLEPN</name>
<comment type="function">
    <text>Reversible hydration of carbon dioxide.</text>
</comment>
<comment type="catalytic activity">
    <reaction>
        <text>hydrogencarbonate + H(+) = CO2 + H2O</text>
        <dbReference type="Rhea" id="RHEA:10748"/>
        <dbReference type="ChEBI" id="CHEBI:15377"/>
        <dbReference type="ChEBI" id="CHEBI:15378"/>
        <dbReference type="ChEBI" id="CHEBI:16526"/>
        <dbReference type="ChEBI" id="CHEBI:17544"/>
        <dbReference type="EC" id="4.2.1.1"/>
    </reaction>
</comment>
<comment type="cofactor">
    <cofactor evidence="1">
        <name>Zn(2+)</name>
        <dbReference type="ChEBI" id="CHEBI:29105"/>
    </cofactor>
</comment>
<comment type="subcellular location">
    <subcellularLocation>
        <location evidence="4">Periplasm</location>
    </subcellularLocation>
</comment>
<comment type="similarity">
    <text evidence="4">Belongs to the alpha-carbonic anhydrase family.</text>
</comment>
<protein>
    <recommendedName>
        <fullName>Carbonic anhydrase</fullName>
        <ecNumber>4.2.1.1</ecNumber>
    </recommendedName>
    <alternativeName>
        <fullName>Carbonate dehydratase</fullName>
    </alternativeName>
</protein>
<accession>O52535</accession>
<keyword id="KW-1015">Disulfide bond</keyword>
<keyword id="KW-0456">Lyase</keyword>
<keyword id="KW-0479">Metal-binding</keyword>
<keyword id="KW-0574">Periplasm</keyword>
<keyword id="KW-0732">Signal</keyword>
<keyword id="KW-0862">Zinc</keyword>
<evidence type="ECO:0000250" key="1"/>
<evidence type="ECO:0000255" key="2"/>
<evidence type="ECO:0000255" key="3">
    <source>
        <dbReference type="PROSITE-ProRule" id="PRU01134"/>
    </source>
</evidence>
<evidence type="ECO:0000305" key="4"/>
<feature type="signal peptide" evidence="2">
    <location>
        <begin position="1"/>
        <end position="22"/>
    </location>
</feature>
<feature type="chain" id="PRO_0000004265" description="Carbonic anhydrase">
    <location>
        <begin position="23"/>
        <end position="246"/>
    </location>
</feature>
<feature type="domain" description="Alpha-carbonic anhydrase" evidence="3">
    <location>
        <begin position="23"/>
        <end position="246"/>
    </location>
</feature>
<feature type="active site" description="Proton acceptor" evidence="3">
    <location>
        <position position="84"/>
    </location>
</feature>
<feature type="binding site" evidence="3">
    <location>
        <position position="111"/>
    </location>
    <ligand>
        <name>Zn(2+)</name>
        <dbReference type="ChEBI" id="CHEBI:29105"/>
        <note>catalytic</note>
    </ligand>
</feature>
<feature type="binding site" evidence="3">
    <location>
        <position position="113"/>
    </location>
    <ligand>
        <name>Zn(2+)</name>
        <dbReference type="ChEBI" id="CHEBI:29105"/>
        <note>catalytic</note>
    </ligand>
</feature>
<feature type="binding site" evidence="3">
    <location>
        <position position="130"/>
    </location>
    <ligand>
        <name>Zn(2+)</name>
        <dbReference type="ChEBI" id="CHEBI:29105"/>
        <note>catalytic</note>
    </ligand>
</feature>
<feature type="binding site" evidence="1">
    <location>
        <begin position="197"/>
        <end position="198"/>
    </location>
    <ligand>
        <name>substrate</name>
    </ligand>
</feature>
<feature type="disulfide bond" evidence="1">
    <location>
        <begin position="46"/>
        <end position="201"/>
    </location>
</feature>